<feature type="signal peptide" evidence="2 3">
    <location>
        <begin position="1"/>
        <end position="23"/>
    </location>
</feature>
<feature type="chain" id="PRO_0000031703" description="Iron-utilization periplasmic protein">
    <location>
        <begin position="24"/>
        <end position="332"/>
    </location>
</feature>
<feature type="binding site">
    <location>
        <position position="32"/>
    </location>
    <ligand>
        <name>Fe cation</name>
        <dbReference type="ChEBI" id="CHEBI:24875"/>
    </ligand>
</feature>
<feature type="binding site">
    <location>
        <position position="80"/>
    </location>
    <ligand>
        <name>Fe cation</name>
        <dbReference type="ChEBI" id="CHEBI:24875"/>
    </ligand>
</feature>
<feature type="binding site">
    <location>
        <position position="218"/>
    </location>
    <ligand>
        <name>Fe cation</name>
        <dbReference type="ChEBI" id="CHEBI:24875"/>
    </ligand>
</feature>
<feature type="binding site">
    <location>
        <position position="219"/>
    </location>
    <ligand>
        <name>Fe cation</name>
        <dbReference type="ChEBI" id="CHEBI:24875"/>
    </ligand>
</feature>
<feature type="sequence variant" description="In strain: PAK12085 and SB33.">
    <original>D</original>
    <variation>A</variation>
    <location>
        <position position="24"/>
    </location>
</feature>
<feature type="sequence variant" description="In strain: TN106.">
    <original>T</original>
    <variation>A</variation>
    <location>
        <position position="37"/>
    </location>
</feature>
<feature type="sequence variant" description="In strain: PAK12085 and SB33.">
    <original>T</original>
    <variation>V</variation>
    <location>
        <position position="37"/>
    </location>
</feature>
<feature type="sequence variant" description="In strain: TN106.">
    <original>E</original>
    <variation>A</variation>
    <location>
        <position position="59"/>
    </location>
</feature>
<feature type="sequence variant" description="In strain: TN106.">
    <original>Q</original>
    <variation>K</variation>
    <location>
        <position position="103"/>
    </location>
</feature>
<feature type="sequence variant" description="In strain: TN106.">
    <original>I</original>
    <variation>V</variation>
    <location>
        <position position="119"/>
    </location>
</feature>
<feature type="sequence variant" description="In strain: TN106.">
    <original>A</original>
    <variation>V</variation>
    <location>
        <position position="284"/>
    </location>
</feature>
<feature type="sequence variant" description="In strain: TN106.">
    <original>I</original>
    <variation>T</variation>
    <location>
        <position position="323"/>
    </location>
</feature>
<feature type="strand" evidence="5">
    <location>
        <begin position="25"/>
        <end position="29"/>
    </location>
</feature>
<feature type="helix" evidence="5">
    <location>
        <begin position="33"/>
        <end position="46"/>
    </location>
</feature>
<feature type="strand" evidence="5">
    <location>
        <begin position="51"/>
        <end position="55"/>
    </location>
</feature>
<feature type="helix" evidence="5">
    <location>
        <begin position="58"/>
        <end position="68"/>
    </location>
</feature>
<feature type="helix" evidence="5">
    <location>
        <begin position="69"/>
        <end position="71"/>
    </location>
</feature>
<feature type="strand" evidence="5">
    <location>
        <begin position="75"/>
        <end position="80"/>
    </location>
</feature>
<feature type="helix" evidence="5">
    <location>
        <begin position="82"/>
        <end position="84"/>
    </location>
</feature>
<feature type="helix" evidence="5">
    <location>
        <begin position="85"/>
        <end position="90"/>
    </location>
</feature>
<feature type="helix" evidence="5">
    <location>
        <begin position="99"/>
        <end position="103"/>
    </location>
</feature>
<feature type="strand" evidence="5">
    <location>
        <begin position="119"/>
        <end position="131"/>
    </location>
</feature>
<feature type="turn" evidence="5">
    <location>
        <begin position="132"/>
        <end position="134"/>
    </location>
</feature>
<feature type="helix" evidence="5">
    <location>
        <begin position="137"/>
        <end position="139"/>
    </location>
</feature>
<feature type="helix" evidence="5">
    <location>
        <begin position="144"/>
        <end position="148"/>
    </location>
</feature>
<feature type="helix" evidence="5">
    <location>
        <begin position="150"/>
        <end position="152"/>
    </location>
</feature>
<feature type="turn" evidence="5">
    <location>
        <begin position="153"/>
        <end position="155"/>
    </location>
</feature>
<feature type="strand" evidence="5">
    <location>
        <begin position="156"/>
        <end position="158"/>
    </location>
</feature>
<feature type="helix" evidence="5">
    <location>
        <begin position="163"/>
        <end position="176"/>
    </location>
</feature>
<feature type="helix" evidence="5">
    <location>
        <begin position="178"/>
        <end position="191"/>
    </location>
</feature>
<feature type="strand" evidence="5">
    <location>
        <begin position="192"/>
        <end position="194"/>
    </location>
</feature>
<feature type="helix" evidence="5">
    <location>
        <begin position="198"/>
        <end position="206"/>
    </location>
</feature>
<feature type="strand" evidence="5">
    <location>
        <begin position="211"/>
        <end position="216"/>
    </location>
</feature>
<feature type="helix" evidence="5">
    <location>
        <begin position="217"/>
        <end position="227"/>
    </location>
</feature>
<feature type="helix" evidence="5">
    <location>
        <begin position="229"/>
        <end position="231"/>
    </location>
</feature>
<feature type="strand" evidence="5">
    <location>
        <begin position="233"/>
        <end position="237"/>
    </location>
</feature>
<feature type="helix" evidence="5">
    <location>
        <begin position="244"/>
        <end position="246"/>
    </location>
</feature>
<feature type="strand" evidence="5">
    <location>
        <begin position="248"/>
        <end position="256"/>
    </location>
</feature>
<feature type="helix" evidence="5">
    <location>
        <begin position="262"/>
        <end position="273"/>
    </location>
</feature>
<feature type="helix" evidence="5">
    <location>
        <begin position="275"/>
        <end position="284"/>
    </location>
</feature>
<feature type="strand" evidence="6">
    <location>
        <begin position="288"/>
        <end position="291"/>
    </location>
</feature>
<feature type="helix" evidence="5">
    <location>
        <begin position="303"/>
        <end position="306"/>
    </location>
</feature>
<feature type="helix" evidence="5">
    <location>
        <begin position="316"/>
        <end position="327"/>
    </location>
</feature>
<proteinExistence type="evidence at protein level"/>
<comment type="function">
    <text evidence="1">Part of the ABC transporter complex FbpABC (TC 3.A.1.10.1) involved in Fe(3+) ions import. This protein specifically binds Fe(3+) and is involved in its transmembrane transport (By similarity).</text>
</comment>
<comment type="subunit">
    <text evidence="4">The complex is composed of two ATP-binding proteins (FbpC), two transmembrane proteins (FbpB) and a solute-binding protein (FbpA).</text>
</comment>
<comment type="subcellular location">
    <subcellularLocation>
        <location evidence="4">Periplasm</location>
    </subcellularLocation>
</comment>
<comment type="induction">
    <text>By iron deprivation.</text>
</comment>
<comment type="similarity">
    <text evidence="4">Belongs to the bacterial solute-binding protein 1 family.</text>
</comment>
<comment type="sequence caution" evidence="4">
    <conflict type="frameshift">
        <sequence resource="EMBL-CDS" id="AAC21773"/>
    </conflict>
</comment>
<keyword id="KW-0002">3D-structure</keyword>
<keyword id="KW-0903">Direct protein sequencing</keyword>
<keyword id="KW-0406">Ion transport</keyword>
<keyword id="KW-0408">Iron</keyword>
<keyword id="KW-0410">Iron transport</keyword>
<keyword id="KW-0479">Metal-binding</keyword>
<keyword id="KW-0574">Periplasm</keyword>
<keyword id="KW-1185">Reference proteome</keyword>
<keyword id="KW-0732">Signal</keyword>
<keyword id="KW-0813">Transport</keyword>
<accession>P35755</accession>
<accession>Q53439</accession>
<organism>
    <name type="scientific">Haemophilus influenzae (strain ATCC 51907 / DSM 11121 / KW20 / Rd)</name>
    <dbReference type="NCBI Taxonomy" id="71421"/>
    <lineage>
        <taxon>Bacteria</taxon>
        <taxon>Pseudomonadati</taxon>
        <taxon>Pseudomonadota</taxon>
        <taxon>Gammaproteobacteria</taxon>
        <taxon>Pasteurellales</taxon>
        <taxon>Pasteurellaceae</taxon>
        <taxon>Haemophilus</taxon>
    </lineage>
</organism>
<reference key="1">
    <citation type="journal article" date="1995" name="Science">
        <title>Whole-genome random sequencing and assembly of Haemophilus influenzae Rd.</title>
        <authorList>
            <person name="Fleischmann R.D."/>
            <person name="Adams M.D."/>
            <person name="White O."/>
            <person name="Clayton R.A."/>
            <person name="Kirkness E.F."/>
            <person name="Kerlavage A.R."/>
            <person name="Bult C.J."/>
            <person name="Tomb J.-F."/>
            <person name="Dougherty B.A."/>
            <person name="Merrick J.M."/>
            <person name="McKenney K."/>
            <person name="Sutton G.G."/>
            <person name="FitzHugh W."/>
            <person name="Fields C.A."/>
            <person name="Gocayne J.D."/>
            <person name="Scott J.D."/>
            <person name="Shirley R."/>
            <person name="Liu L.-I."/>
            <person name="Glodek A."/>
            <person name="Kelley J.M."/>
            <person name="Weidman J.F."/>
            <person name="Phillips C.A."/>
            <person name="Spriggs T."/>
            <person name="Hedblom E."/>
            <person name="Cotton M.D."/>
            <person name="Utterback T.R."/>
            <person name="Hanna M.C."/>
            <person name="Nguyen D.T."/>
            <person name="Saudek D.M."/>
            <person name="Brandon R.C."/>
            <person name="Fine L.D."/>
            <person name="Fritchman J.L."/>
            <person name="Fuhrmann J.L."/>
            <person name="Geoghagen N.S.M."/>
            <person name="Gnehm C.L."/>
            <person name="McDonald L.A."/>
            <person name="Small K.V."/>
            <person name="Fraser C.M."/>
            <person name="Smith H.O."/>
            <person name="Venter J.C."/>
        </authorList>
    </citation>
    <scope>NUCLEOTIDE SEQUENCE [LARGE SCALE GENOMIC DNA]</scope>
    <source>
        <strain>ATCC 51907 / DSM 11121 / KW20 / Rd</strain>
    </source>
</reference>
<reference key="2">
    <citation type="journal article" date="1994" name="Infect. Immun.">
        <title>Identification of a locus involved in the utilization of iron by Haemophilus influenzae.</title>
        <authorList>
            <person name="Sanders J.D."/>
            <person name="Cope L.D."/>
            <person name="Hansen E.J."/>
        </authorList>
    </citation>
    <scope>NUCLEOTIDE SEQUENCE [GENOMIC DNA]</scope>
    <scope>PARTIAL PROTEIN SEQUENCE</scope>
    <source>
        <strain>NTHi TN106</strain>
    </source>
</reference>
<reference key="3">
    <citation type="journal article" date="1992" name="J. Bacteriol.">
        <title>Identification of two iron-repressed periplasmic proteins in Haemophilus influenzae.</title>
        <authorList>
            <person name="Harkness R.E."/>
            <person name="Chong P."/>
            <person name="Klein M.H."/>
        </authorList>
    </citation>
    <scope>PROTEIN SEQUENCE OF 24-45</scope>
    <source>
        <strain>Eagan / 8358</strain>
    </source>
</reference>
<reference key="4">
    <citation type="journal article" date="2000" name="Electrophoresis">
        <title>Two-dimensional map of the proteome of Haemophilus influenzae.</title>
        <authorList>
            <person name="Langen H."/>
            <person name="Takacs B."/>
            <person name="Evers S."/>
            <person name="Berndt P."/>
            <person name="Lahm H.W."/>
            <person name="Wipf B."/>
            <person name="Gray C."/>
            <person name="Fountoulakis M."/>
        </authorList>
    </citation>
    <scope>PROTEIN SEQUENCE OF 24-31</scope>
    <source>
        <strain>ATCC 51907 / DSM 11121 / KW20 / Rd</strain>
    </source>
</reference>
<reference key="5">
    <citation type="journal article" date="1997" name="Nat. Struct. Biol.">
        <title>Structure of Haemophilus influenzae Fe(+3)-binding protein reveals convergent evolution within a superfamily.</title>
        <authorList>
            <person name="Bruns C.M."/>
            <person name="Nowalk A.J."/>
            <person name="Arvai A.S."/>
            <person name="McTigue M.A."/>
            <person name="Vaughan K.G."/>
            <person name="Mietzner T.A."/>
            <person name="McRee D.E."/>
        </authorList>
    </citation>
    <scope>X-RAY CRYSTALLOGRAPHY (1.6 ANGSTROMS) OF 24-332</scope>
</reference>
<reference key="6">
    <citation type="journal article" date="2001" name="Biochemistry">
        <title>Crystallographic and biochemical analyses of the metal-free Haemophilus influenzae Fe(3+)-binding protein.</title>
        <authorList>
            <person name="Bruns C.M."/>
            <person name="Anderson D.S."/>
            <person name="Vaughan K.G."/>
            <person name="Williams P.A."/>
            <person name="Nowalk A.J."/>
            <person name="McRee D.E."/>
            <person name="Mietzner T.A."/>
        </authorList>
    </citation>
    <scope>X-RAY CRYSTALLOGRAPHY (1.75 ANGSTROMS) OF 24-332</scope>
</reference>
<evidence type="ECO:0000250" key="1"/>
<evidence type="ECO:0000269" key="2">
    <source>
    </source>
</evidence>
<evidence type="ECO:0000269" key="3">
    <source>
    </source>
</evidence>
<evidence type="ECO:0000305" key="4"/>
<evidence type="ECO:0007829" key="5">
    <source>
        <dbReference type="PDB" id="1NNF"/>
    </source>
</evidence>
<evidence type="ECO:0007829" key="6">
    <source>
        <dbReference type="PDB" id="3ODB"/>
    </source>
</evidence>
<name>FBPA_HAEIN</name>
<sequence length="332" mass="36193">MQFKHFKLATLAAALAFSANSFADITVYNGQHKEAATAVAKAFEQETGIKVTLNSGKSEQLAGQLKEEGDKTPADVFYTEQTATFADLSEAGLLAPISEQTIQQTAQKGVPLAPKKDWIALSGRSRVVVYDHTKLSEKDMEKSVLDYATPKWKGKIGYVSTSGAFLEQVVALSKMKGDKVALNWLKGLKENGKLYAKNSVALQAVENGEVPAALINNYYWYNLAKEKGVENLKSRLYFVRHQDPGALVSYSGAAVLKASKNQAEAQKFVDFLASKKGQEALVAARAEYPLRADVVSPFNLEPYEKLEAPVVSATTAQDKEHAIKLIEEAGLK</sequence>
<protein>
    <recommendedName>
        <fullName>Iron-utilization periplasmic protein</fullName>
    </recommendedName>
    <alternativeName>
        <fullName>Fe(3+)-binding protein</fullName>
    </alternativeName>
    <alternativeName>
        <fullName>Iron-regulated 40 kDa protein</fullName>
    </alternativeName>
    <alternativeName>
        <fullName>Major ferric iron-binding protein</fullName>
        <shortName>MIRP</shortName>
    </alternativeName>
</protein>
<gene>
    <name type="primary">fbpA</name>
    <name type="synonym">fbp</name>
    <name type="synonym">hitA</name>
    <name type="ordered locus">HI_0097</name>
</gene>
<dbReference type="EMBL" id="L42023">
    <property type="protein sequence ID" value="AAC21773.1"/>
    <property type="status" value="ALT_FRAME"/>
    <property type="molecule type" value="Genomic_DNA"/>
</dbReference>
<dbReference type="EMBL" id="S72674">
    <property type="protein sequence ID" value="AAB32110.1"/>
    <property type="molecule type" value="Genomic_DNA"/>
</dbReference>
<dbReference type="PIR" id="A41833">
    <property type="entry name" value="A41833"/>
</dbReference>
<dbReference type="PIR" id="C64048">
    <property type="entry name" value="C64048"/>
</dbReference>
<dbReference type="PIR" id="T10886">
    <property type="entry name" value="T10886"/>
</dbReference>
<dbReference type="RefSeq" id="NP_438271.2">
    <property type="nucleotide sequence ID" value="NC_000907.1"/>
</dbReference>
<dbReference type="PDB" id="1D9V">
    <property type="method" value="X-ray"/>
    <property type="resolution" value="1.75 A"/>
    <property type="chains" value="A=24-332"/>
</dbReference>
<dbReference type="PDB" id="1MRP">
    <property type="method" value="X-ray"/>
    <property type="resolution" value="1.60 A"/>
    <property type="chains" value="A=24-332"/>
</dbReference>
<dbReference type="PDB" id="1NNF">
    <property type="method" value="X-ray"/>
    <property type="resolution" value="1.10 A"/>
    <property type="chains" value="A=24-332"/>
</dbReference>
<dbReference type="PDB" id="1QVS">
    <property type="method" value="X-ray"/>
    <property type="resolution" value="2.10 A"/>
    <property type="chains" value="A=24-332"/>
</dbReference>
<dbReference type="PDB" id="1QW0">
    <property type="method" value="X-ray"/>
    <property type="resolution" value="1.90 A"/>
    <property type="chains" value="A=24-332"/>
</dbReference>
<dbReference type="PDB" id="2O68">
    <property type="method" value="X-ray"/>
    <property type="resolution" value="1.70 A"/>
    <property type="chains" value="A=24-332"/>
</dbReference>
<dbReference type="PDB" id="2O69">
    <property type="method" value="X-ray"/>
    <property type="resolution" value="2.00 A"/>
    <property type="chains" value="A=24-332"/>
</dbReference>
<dbReference type="PDB" id="2O6A">
    <property type="method" value="X-ray"/>
    <property type="resolution" value="1.80 A"/>
    <property type="chains" value="A=24-332"/>
</dbReference>
<dbReference type="PDB" id="3KN7">
    <property type="method" value="X-ray"/>
    <property type="resolution" value="1.71 A"/>
    <property type="chains" value="A=24-332"/>
</dbReference>
<dbReference type="PDB" id="3KN8">
    <property type="method" value="X-ray"/>
    <property type="resolution" value="1.89 A"/>
    <property type="chains" value="A=24-332"/>
</dbReference>
<dbReference type="PDB" id="3OD7">
    <property type="method" value="X-ray"/>
    <property type="resolution" value="1.80 A"/>
    <property type="chains" value="A=24-332"/>
</dbReference>
<dbReference type="PDB" id="3ODB">
    <property type="method" value="X-ray"/>
    <property type="resolution" value="1.62 A"/>
    <property type="chains" value="A=24-332"/>
</dbReference>
<dbReference type="PDBsum" id="1D9V"/>
<dbReference type="PDBsum" id="1MRP"/>
<dbReference type="PDBsum" id="1NNF"/>
<dbReference type="PDBsum" id="1QVS"/>
<dbReference type="PDBsum" id="1QW0"/>
<dbReference type="PDBsum" id="2O68"/>
<dbReference type="PDBsum" id="2O69"/>
<dbReference type="PDBsum" id="2O6A"/>
<dbReference type="PDBsum" id="3KN7"/>
<dbReference type="PDBsum" id="3KN8"/>
<dbReference type="PDBsum" id="3OD7"/>
<dbReference type="PDBsum" id="3ODB"/>
<dbReference type="SMR" id="P35755"/>
<dbReference type="STRING" id="71421.HI_0097"/>
<dbReference type="TCDB" id="3.A.1.10.3">
    <property type="family name" value="the atp-binding cassette (abc) superfamily"/>
</dbReference>
<dbReference type="EnsemblBacteria" id="AAC21773">
    <property type="protein sequence ID" value="AAC21773"/>
    <property type="gene ID" value="HI_0097"/>
</dbReference>
<dbReference type="KEGG" id="hin:HI_0097"/>
<dbReference type="PATRIC" id="fig|71421.8.peg.100"/>
<dbReference type="eggNOG" id="COG1840">
    <property type="taxonomic scope" value="Bacteria"/>
</dbReference>
<dbReference type="HOGENOM" id="CLU_026974_2_0_6"/>
<dbReference type="OrthoDB" id="9769567at2"/>
<dbReference type="PhylomeDB" id="P35755"/>
<dbReference type="BioCyc" id="HINF71421:G1GJ1-102-MONOMER"/>
<dbReference type="EvolutionaryTrace" id="P35755"/>
<dbReference type="Proteomes" id="UP000000579">
    <property type="component" value="Chromosome"/>
</dbReference>
<dbReference type="GO" id="GO:0042597">
    <property type="term" value="C:periplasmic space"/>
    <property type="evidence" value="ECO:0007669"/>
    <property type="project" value="UniProtKB-SubCell"/>
</dbReference>
<dbReference type="GO" id="GO:0046872">
    <property type="term" value="F:metal ion binding"/>
    <property type="evidence" value="ECO:0007669"/>
    <property type="project" value="UniProtKB-KW"/>
</dbReference>
<dbReference type="GO" id="GO:0006826">
    <property type="term" value="P:iron ion transport"/>
    <property type="evidence" value="ECO:0007669"/>
    <property type="project" value="UniProtKB-KW"/>
</dbReference>
<dbReference type="GO" id="GO:0055085">
    <property type="term" value="P:transmembrane transport"/>
    <property type="evidence" value="ECO:0007669"/>
    <property type="project" value="InterPro"/>
</dbReference>
<dbReference type="CDD" id="cd13543">
    <property type="entry name" value="PBP2_Fbp"/>
    <property type="match status" value="1"/>
</dbReference>
<dbReference type="Gene3D" id="3.40.190.10">
    <property type="entry name" value="Periplasmic binding protein-like II"/>
    <property type="match status" value="2"/>
</dbReference>
<dbReference type="InterPro" id="IPR026045">
    <property type="entry name" value="Ferric-bd"/>
</dbReference>
<dbReference type="InterPro" id="IPR006059">
    <property type="entry name" value="SBP"/>
</dbReference>
<dbReference type="InterPro" id="IPR006061">
    <property type="entry name" value="SBP_1_CS"/>
</dbReference>
<dbReference type="PANTHER" id="PTHR30006:SF15">
    <property type="entry name" value="IRON-UTILIZATION PERIPLASMIC PROTEIN"/>
    <property type="match status" value="1"/>
</dbReference>
<dbReference type="PANTHER" id="PTHR30006">
    <property type="entry name" value="THIAMINE-BINDING PERIPLASMIC PROTEIN-RELATED"/>
    <property type="match status" value="1"/>
</dbReference>
<dbReference type="Pfam" id="PF01547">
    <property type="entry name" value="SBP_bac_1"/>
    <property type="match status" value="1"/>
</dbReference>
<dbReference type="PIRSF" id="PIRSF002825">
    <property type="entry name" value="CfbpA"/>
    <property type="match status" value="1"/>
</dbReference>
<dbReference type="SUPFAM" id="SSF53850">
    <property type="entry name" value="Periplasmic binding protein-like II"/>
    <property type="match status" value="1"/>
</dbReference>
<dbReference type="PROSITE" id="PS01037">
    <property type="entry name" value="SBP_BACTERIAL_1"/>
    <property type="match status" value="1"/>
</dbReference>